<proteinExistence type="inferred from homology"/>
<gene>
    <name type="primary">OPG101</name>
    <name type="synonym">TK</name>
    <name type="ORF">MPXV084</name>
</gene>
<dbReference type="EC" id="2.7.1.21"/>
<dbReference type="EMBL" id="MT903340">
    <property type="protein sequence ID" value="QNP12956.1"/>
    <property type="molecule type" value="Genomic_DNA"/>
</dbReference>
<dbReference type="RefSeq" id="YP_010377083.1">
    <property type="nucleotide sequence ID" value="NC_063383.1"/>
</dbReference>
<dbReference type="SMR" id="A0A7H0DN73"/>
<dbReference type="GeneID" id="72551496"/>
<dbReference type="Proteomes" id="UP000516359">
    <property type="component" value="Genome"/>
</dbReference>
<dbReference type="GO" id="GO:0005524">
    <property type="term" value="F:ATP binding"/>
    <property type="evidence" value="ECO:0007669"/>
    <property type="project" value="UniProtKB-KW"/>
</dbReference>
<dbReference type="GO" id="GO:0046872">
    <property type="term" value="F:metal ion binding"/>
    <property type="evidence" value="ECO:0007669"/>
    <property type="project" value="UniProtKB-KW"/>
</dbReference>
<dbReference type="GO" id="GO:0004797">
    <property type="term" value="F:thymidine kinase activity"/>
    <property type="evidence" value="ECO:0007669"/>
    <property type="project" value="InterPro"/>
</dbReference>
<dbReference type="GO" id="GO:0071897">
    <property type="term" value="P:DNA biosynthetic process"/>
    <property type="evidence" value="ECO:0007669"/>
    <property type="project" value="UniProtKB-KW"/>
</dbReference>
<dbReference type="GO" id="GO:0046104">
    <property type="term" value="P:thymidine metabolic process"/>
    <property type="evidence" value="ECO:0007669"/>
    <property type="project" value="TreeGrafter"/>
</dbReference>
<dbReference type="FunFam" id="3.30.60.20:FF:000028">
    <property type="entry name" value="Thymidine kinase"/>
    <property type="match status" value="1"/>
</dbReference>
<dbReference type="FunFam" id="3.40.50.300:FF:000761">
    <property type="entry name" value="Thymidine kinase"/>
    <property type="match status" value="1"/>
</dbReference>
<dbReference type="Gene3D" id="3.30.60.20">
    <property type="match status" value="1"/>
</dbReference>
<dbReference type="Gene3D" id="3.40.50.300">
    <property type="entry name" value="P-loop containing nucleotide triphosphate hydrolases"/>
    <property type="match status" value="1"/>
</dbReference>
<dbReference type="InterPro" id="IPR027417">
    <property type="entry name" value="P-loop_NTPase"/>
</dbReference>
<dbReference type="InterPro" id="IPR001267">
    <property type="entry name" value="Thymidine_kinase"/>
</dbReference>
<dbReference type="InterPro" id="IPR020633">
    <property type="entry name" value="Thymidine_kinase_CS"/>
</dbReference>
<dbReference type="PANTHER" id="PTHR11441">
    <property type="entry name" value="THYMIDINE KINASE"/>
    <property type="match status" value="1"/>
</dbReference>
<dbReference type="PANTHER" id="PTHR11441:SF0">
    <property type="entry name" value="THYMIDINE KINASE, CYTOSOLIC"/>
    <property type="match status" value="1"/>
</dbReference>
<dbReference type="Pfam" id="PF00265">
    <property type="entry name" value="TK"/>
    <property type="match status" value="1"/>
</dbReference>
<dbReference type="PIRSF" id="PIRSF035805">
    <property type="entry name" value="TK_cell"/>
    <property type="match status" value="1"/>
</dbReference>
<dbReference type="SUPFAM" id="SSF57716">
    <property type="entry name" value="Glucocorticoid receptor-like (DNA-binding domain)"/>
    <property type="match status" value="1"/>
</dbReference>
<dbReference type="SUPFAM" id="SSF52540">
    <property type="entry name" value="P-loop containing nucleoside triphosphate hydrolases"/>
    <property type="match status" value="1"/>
</dbReference>
<dbReference type="PROSITE" id="PS00603">
    <property type="entry name" value="TK_CELLULAR_TYPE"/>
    <property type="match status" value="1"/>
</dbReference>
<organismHost>
    <name type="scientific">Cynomys gunnisoni</name>
    <name type="common">Gunnison's prairie dog</name>
    <name type="synonym">Spermophilus gunnisoni</name>
    <dbReference type="NCBI Taxonomy" id="45479"/>
</organismHost>
<organismHost>
    <name type="scientific">Cynomys leucurus</name>
    <name type="common">White-tailed prairie dog</name>
    <dbReference type="NCBI Taxonomy" id="99825"/>
</organismHost>
<organismHost>
    <name type="scientific">Cynomys ludovicianus</name>
    <name type="common">Black-tailed prairie dog</name>
    <dbReference type="NCBI Taxonomy" id="45480"/>
</organismHost>
<organismHost>
    <name type="scientific">Cynomys mexicanus</name>
    <name type="common">Mexican prairie dog</name>
    <dbReference type="NCBI Taxonomy" id="99826"/>
</organismHost>
<organismHost>
    <name type="scientific">Cynomys parvidens</name>
    <name type="common">Utah prairie dog</name>
    <dbReference type="NCBI Taxonomy" id="99827"/>
</organismHost>
<organismHost>
    <name type="scientific">Gliridae</name>
    <name type="common">dormice</name>
    <dbReference type="NCBI Taxonomy" id="30650"/>
</organismHost>
<organismHost>
    <name type="scientific">Heliosciurus ruwenzorii</name>
    <name type="common">Ruwenzori sun squirrel</name>
    <dbReference type="NCBI Taxonomy" id="226685"/>
</organismHost>
<organismHost>
    <name type="scientific">Homo sapiens</name>
    <name type="common">Human</name>
    <dbReference type="NCBI Taxonomy" id="9606"/>
</organismHost>
<organismHost>
    <name type="scientific">Mus musculus</name>
    <name type="common">Mouse</name>
    <dbReference type="NCBI Taxonomy" id="10090"/>
</organismHost>
<keyword id="KW-0067">ATP-binding</keyword>
<keyword id="KW-1015">Disulfide bond</keyword>
<keyword id="KW-0237">DNA synthesis</keyword>
<keyword id="KW-0418">Kinase</keyword>
<keyword id="KW-0479">Metal-binding</keyword>
<keyword id="KW-0547">Nucleotide-binding</keyword>
<keyword id="KW-1185">Reference proteome</keyword>
<keyword id="KW-0808">Transferase</keyword>
<keyword id="KW-0862">Zinc</keyword>
<accession>A0A7H0DN73</accession>
<name>KITH_MONPV</name>
<protein>
    <recommendedName>
        <fullName>Thymidine kinase</fullName>
        <ecNumber>2.7.1.21</ecNumber>
    </recommendedName>
</protein>
<organism>
    <name type="scientific">Monkeypox virus</name>
    <dbReference type="NCBI Taxonomy" id="10244"/>
    <lineage>
        <taxon>Viruses</taxon>
        <taxon>Varidnaviria</taxon>
        <taxon>Bamfordvirae</taxon>
        <taxon>Nucleocytoviricota</taxon>
        <taxon>Pokkesviricetes</taxon>
        <taxon>Chitovirales</taxon>
        <taxon>Poxviridae</taxon>
        <taxon>Chordopoxvirinae</taxon>
        <taxon>Orthopoxvirus</taxon>
    </lineage>
</organism>
<comment type="function">
    <text evidence="2">Phosphorylates thymidine and thymidine analogs, such as azidothymidine (AZT). Part of the salvage pathway for pyrimidine deoxyribonucleotide synthesis.</text>
</comment>
<comment type="catalytic activity">
    <reaction evidence="2">
        <text>thymidine + ATP = dTMP + ADP + H(+)</text>
        <dbReference type="Rhea" id="RHEA:19129"/>
        <dbReference type="ChEBI" id="CHEBI:15378"/>
        <dbReference type="ChEBI" id="CHEBI:17748"/>
        <dbReference type="ChEBI" id="CHEBI:30616"/>
        <dbReference type="ChEBI" id="CHEBI:63528"/>
        <dbReference type="ChEBI" id="CHEBI:456216"/>
        <dbReference type="EC" id="2.7.1.21"/>
    </reaction>
</comment>
<comment type="subunit">
    <text evidence="1">Homotetramer. Two molecules of substrate bind to each enzyme tetramer.</text>
</comment>
<comment type="similarity">
    <text evidence="3">Belongs to the thymidine kinase family.</text>
</comment>
<sequence>MNGGHIQLIIGPMFSGKSTELIRRVRRYQIAQYKCVTIKYSNDNRYGTGLWTHDKNNFAALEVTKLCDVLEAITDFSVIGIDEGQFFPDIVEFCERMANEGKIVIVAALDGTFQRRPFNNILNLIPLSEMVVKLTAVCMKCFKEASFSKRLGTETEIEIIGGNDMYQSVCRKCYIDS</sequence>
<reference key="1">
    <citation type="journal article" date="2022" name="J. Infect. Dis.">
        <title>Exportation of Monkeypox virus from the African continent.</title>
        <authorList>
            <person name="Mauldin M.R."/>
            <person name="McCollum A.M."/>
            <person name="Nakazawa Y.J."/>
            <person name="Mandra A."/>
            <person name="Whitehouse E.R."/>
            <person name="Davidson W."/>
            <person name="Zhao H."/>
            <person name="Gao J."/>
            <person name="Li Y."/>
            <person name="Doty J."/>
            <person name="Yinka-Ogunleye A."/>
            <person name="Akinpelu A."/>
            <person name="Aruna O."/>
            <person name="Naidoo D."/>
            <person name="Lewandowski K."/>
            <person name="Afrough B."/>
            <person name="Graham V."/>
            <person name="Aarons E."/>
            <person name="Hewson R."/>
            <person name="Vipond R."/>
            <person name="Dunning J."/>
            <person name="Chand M."/>
            <person name="Brown C."/>
            <person name="Cohen-Gihon I."/>
            <person name="Erez N."/>
            <person name="Shifman O."/>
            <person name="Israeli O."/>
            <person name="Sharon M."/>
            <person name="Schwartz E."/>
            <person name="Beth-Din A."/>
            <person name="Zvi A."/>
            <person name="Mak T.M."/>
            <person name="Ng Y.K."/>
            <person name="Cui L."/>
            <person name="Lin R.T.P."/>
            <person name="Olson V.A."/>
            <person name="Brooks T."/>
            <person name="Paran N."/>
            <person name="Ihekweazu C."/>
            <person name="Reynolds M.G."/>
        </authorList>
    </citation>
    <scope>NUCLEOTIDE SEQUENCE [LARGE SCALE GENOMIC DNA]</scope>
    <source>
        <strain>MPXV-M5312_HM12_Rivers</strain>
    </source>
</reference>
<evidence type="ECO:0000250" key="1"/>
<evidence type="ECO:0000250" key="2">
    <source>
        <dbReference type="UniProtKB" id="O57203"/>
    </source>
</evidence>
<evidence type="ECO:0000305" key="3"/>
<feature type="chain" id="PRO_0000457389" description="Thymidine kinase">
    <location>
        <begin position="1"/>
        <end position="177"/>
    </location>
</feature>
<feature type="active site" description="Proton acceptor" evidence="2">
    <location>
        <position position="83"/>
    </location>
</feature>
<feature type="binding site" evidence="2">
    <location>
        <begin position="11"/>
        <end position="18"/>
    </location>
    <ligand>
        <name>ATP</name>
        <dbReference type="ChEBI" id="CHEBI:30616"/>
    </ligand>
</feature>
<feature type="binding site" evidence="2">
    <location>
        <position position="113"/>
    </location>
    <ligand>
        <name>substrate</name>
    </ligand>
</feature>
<feature type="binding site" evidence="2">
    <location>
        <position position="138"/>
    </location>
    <ligand>
        <name>Zn(2+)</name>
        <dbReference type="ChEBI" id="CHEBI:29105"/>
    </ligand>
</feature>
<feature type="binding site" evidence="2">
    <location>
        <position position="141"/>
    </location>
    <ligand>
        <name>Zn(2+)</name>
        <dbReference type="ChEBI" id="CHEBI:29105"/>
    </ligand>
</feature>
<feature type="binding site" evidence="2">
    <location>
        <begin position="157"/>
        <end position="161"/>
    </location>
    <ligand>
        <name>substrate</name>
    </ligand>
</feature>
<feature type="binding site" evidence="2">
    <location>
        <position position="170"/>
    </location>
    <ligand>
        <name>Zn(2+)</name>
        <dbReference type="ChEBI" id="CHEBI:29105"/>
    </ligand>
</feature>
<feature type="binding site" evidence="2">
    <location>
        <position position="173"/>
    </location>
    <ligand>
        <name>Zn(2+)</name>
        <dbReference type="ChEBI" id="CHEBI:29105"/>
    </ligand>
</feature>
<feature type="disulfide bond" description="Interchain (with C-173)" evidence="2">
    <location>
        <position position="170"/>
    </location>
</feature>
<feature type="disulfide bond" description="Interchain (with C-170)" evidence="2">
    <location>
        <position position="173"/>
    </location>
</feature>